<accession>Q28DE0</accession>
<name>FAKD1_XENTR</name>
<organism>
    <name type="scientific">Xenopus tropicalis</name>
    <name type="common">Western clawed frog</name>
    <name type="synonym">Silurana tropicalis</name>
    <dbReference type="NCBI Taxonomy" id="8364"/>
    <lineage>
        <taxon>Eukaryota</taxon>
        <taxon>Metazoa</taxon>
        <taxon>Chordata</taxon>
        <taxon>Craniata</taxon>
        <taxon>Vertebrata</taxon>
        <taxon>Euteleostomi</taxon>
        <taxon>Amphibia</taxon>
        <taxon>Batrachia</taxon>
        <taxon>Anura</taxon>
        <taxon>Pipoidea</taxon>
        <taxon>Pipidae</taxon>
        <taxon>Xenopodinae</taxon>
        <taxon>Xenopus</taxon>
        <taxon>Silurana</taxon>
    </lineage>
</organism>
<gene>
    <name type="primary">fastkd1</name>
    <name type="ORF">TEgg089k23.1</name>
</gene>
<evidence type="ECO:0000250" key="1">
    <source>
        <dbReference type="UniProtKB" id="Q53R41"/>
    </source>
</evidence>
<evidence type="ECO:0000255" key="2">
    <source>
        <dbReference type="PROSITE-ProRule" id="PRU00619"/>
    </source>
</evidence>
<evidence type="ECO:0000305" key="3"/>
<dbReference type="EMBL" id="CR855565">
    <property type="protein sequence ID" value="CAJ83739.1"/>
    <property type="molecule type" value="mRNA"/>
</dbReference>
<dbReference type="RefSeq" id="NP_001039188.1">
    <property type="nucleotide sequence ID" value="NM_001045723.1"/>
</dbReference>
<dbReference type="SMR" id="Q28DE0"/>
<dbReference type="FunCoup" id="Q28DE0">
    <property type="interactions" value="1256"/>
</dbReference>
<dbReference type="PaxDb" id="8364-ENSXETP00000041063"/>
<dbReference type="GeneID" id="734038"/>
<dbReference type="KEGG" id="xtr:734038"/>
<dbReference type="AGR" id="Xenbase:XB-GENE-5730765"/>
<dbReference type="CTD" id="79675"/>
<dbReference type="Xenbase" id="XB-GENE-5730765">
    <property type="gene designation" value="fastkd1"/>
</dbReference>
<dbReference type="eggNOG" id="ENOG502QQ64">
    <property type="taxonomic scope" value="Eukaryota"/>
</dbReference>
<dbReference type="InParanoid" id="Q28DE0"/>
<dbReference type="OMA" id="FRPFSCE"/>
<dbReference type="OrthoDB" id="385235at2759"/>
<dbReference type="Proteomes" id="UP000008143">
    <property type="component" value="Chromosome 9"/>
</dbReference>
<dbReference type="GO" id="GO:0005739">
    <property type="term" value="C:mitochondrion"/>
    <property type="evidence" value="ECO:0000250"/>
    <property type="project" value="UniProtKB"/>
</dbReference>
<dbReference type="GO" id="GO:0044528">
    <property type="term" value="P:regulation of mitochondrial mRNA stability"/>
    <property type="evidence" value="ECO:0007669"/>
    <property type="project" value="InterPro"/>
</dbReference>
<dbReference type="InterPro" id="IPR013579">
    <property type="entry name" value="FAST_2"/>
</dbReference>
<dbReference type="InterPro" id="IPR050870">
    <property type="entry name" value="FAST_kinase"/>
</dbReference>
<dbReference type="InterPro" id="IPR010622">
    <property type="entry name" value="FAST_Leu-rich"/>
</dbReference>
<dbReference type="InterPro" id="IPR013584">
    <property type="entry name" value="RAP"/>
</dbReference>
<dbReference type="PANTHER" id="PTHR21228:SF29">
    <property type="entry name" value="FAST KINASE DOMAIN-CONTAINING PROTEIN 1, MITOCHONDRIAL"/>
    <property type="match status" value="1"/>
</dbReference>
<dbReference type="PANTHER" id="PTHR21228">
    <property type="entry name" value="FAST LEU-RICH DOMAIN-CONTAINING"/>
    <property type="match status" value="1"/>
</dbReference>
<dbReference type="Pfam" id="PF06743">
    <property type="entry name" value="FAST_1"/>
    <property type="match status" value="1"/>
</dbReference>
<dbReference type="Pfam" id="PF08368">
    <property type="entry name" value="FAST_2"/>
    <property type="match status" value="1"/>
</dbReference>
<dbReference type="Pfam" id="PF08373">
    <property type="entry name" value="RAP"/>
    <property type="match status" value="1"/>
</dbReference>
<dbReference type="SMART" id="SM00952">
    <property type="entry name" value="RAP"/>
    <property type="match status" value="1"/>
</dbReference>
<dbReference type="PROSITE" id="PS51286">
    <property type="entry name" value="RAP"/>
    <property type="match status" value="1"/>
</dbReference>
<feature type="transit peptide" description="Mitochondrion" evidence="3">
    <location>
        <begin position="1"/>
        <end status="unknown"/>
    </location>
</feature>
<feature type="chain" id="PRO_0000284713" description="FAST kinase domain-containing protein 1, mitochondrial">
    <location>
        <begin status="unknown"/>
        <end position="832"/>
    </location>
</feature>
<feature type="domain" description="RAP" evidence="2">
    <location>
        <begin position="765"/>
        <end position="825"/>
    </location>
</feature>
<protein>
    <recommendedName>
        <fullName>FAST kinase domain-containing protein 1, mitochondrial</fullName>
    </recommendedName>
</protein>
<reference key="1">
    <citation type="submission" date="2006-10" db="EMBL/GenBank/DDBJ databases">
        <authorList>
            <consortium name="Sanger Xenopus tropicalis EST/cDNA project"/>
        </authorList>
    </citation>
    <scope>NUCLEOTIDE SEQUENCE [LARGE SCALE MRNA]</scope>
    <source>
        <tissue>Egg</tissue>
    </source>
</reference>
<keyword id="KW-0496">Mitochondrion</keyword>
<keyword id="KW-1185">Reference proteome</keyword>
<keyword id="KW-0809">Transit peptide</keyword>
<comment type="function">
    <text evidence="1">May regulate the stability of some mitochondrial mRNA species.</text>
</comment>
<comment type="subcellular location">
    <subcellularLocation>
        <location evidence="1">Mitochondrion</location>
    </subcellularLocation>
</comment>
<comment type="domain">
    <text evidence="1">The RAP domain seems to regulate mitochondrial mRNA levels.</text>
</comment>
<comment type="similarity">
    <text evidence="3">Belongs to the FAST kinase family.</text>
</comment>
<proteinExistence type="evidence at transcript level"/>
<sequence>MFRWSCAFRLSRSLLQTRFLSTDPLLDQFKICLSEDQVFQLVGKNKARLSVTHVGYAINLLWQFQKEKPRMLRTIGQVRGHPEFIALRILAENKIEFMDDKALVEILYNILRFNLEAHDSLVQQLVMEGWRRLERFNLTALSKFAVCLVEQHMNMSPLMGRIASIVDGTLDDVQDARILSSLMVSIYGVISPTLRDRLVDKADSLVDTLDVSHFNHPRRIVQFLRNMKYTYRPLLEKCNSVFLQNVGQMDPENLSIIIGLYQSLQFNNAEFRLMARARLIETMDQCSDVASYTKLFAALGPMAGQDIREKLEEGILTMADEMNPTQLLAILGTMEEMECRNTLLIAKISSLLQKYLESYRPVELARITQAIVTLRCQTPELFSMLQKILERLLKSSFIPADVSMLARVISTLPAARVDEEILSKVDAILPQCSLSDLSSLALAIVKWVRTDQPSRSSTSGGLGNLLLKLNTCGRERIAKIDKIDLFLDELKYTTGDWLEEVLLKDTISTCERLIDQVTWKNVPEFALFITRTNYLCAQVLDKIALVATEDITKIHYSATYATLLPFVVLNYDPPNGEAFFDACIQHFLPHLNSFDPHLVVLLAYSLALAEYFPEELIKAVFNVDFLGRLDAQLETFSSALNMRIRLRLMELNRAVCLECPEFQIPWFHDRYCQQLQHRANGGISSVQRQIHQLLGEILGGINYAKVSVMTPYYHAIDFECILDKNKKPIPYLDQNVLSADLSKVQWGNGGPLQETKSLPPGAQRVAIEFLDSKAFSKNSSNIKGEYVMKKRHLEILGYHVVQIASFEWNSMELSTKDAWIDYLRKRIFADDV</sequence>